<reference key="1">
    <citation type="journal article" date="2008" name="BMC Genomics">
        <title>The genome sequence of the fish pathogen Aliivibrio salmonicida strain LFI1238 shows extensive evidence of gene decay.</title>
        <authorList>
            <person name="Hjerde E."/>
            <person name="Lorentzen M.S."/>
            <person name="Holden M.T."/>
            <person name="Seeger K."/>
            <person name="Paulsen S."/>
            <person name="Bason N."/>
            <person name="Churcher C."/>
            <person name="Harris D."/>
            <person name="Norbertczak H."/>
            <person name="Quail M.A."/>
            <person name="Sanders S."/>
            <person name="Thurston S."/>
            <person name="Parkhill J."/>
            <person name="Willassen N.P."/>
            <person name="Thomson N.R."/>
        </authorList>
    </citation>
    <scope>NUCLEOTIDE SEQUENCE [LARGE SCALE GENOMIC DNA]</scope>
    <source>
        <strain>LFI1238</strain>
    </source>
</reference>
<dbReference type="EMBL" id="FM178379">
    <property type="protein sequence ID" value="CAQ80288.1"/>
    <property type="molecule type" value="Genomic_DNA"/>
</dbReference>
<dbReference type="RefSeq" id="WP_012551067.1">
    <property type="nucleotide sequence ID" value="NC_011312.1"/>
</dbReference>
<dbReference type="SMR" id="B6ELD6"/>
<dbReference type="KEGG" id="vsa:VSAL_I2604"/>
<dbReference type="eggNOG" id="COG1489">
    <property type="taxonomic scope" value="Bacteria"/>
</dbReference>
<dbReference type="HOGENOM" id="CLU_052299_2_0_6"/>
<dbReference type="Proteomes" id="UP000001730">
    <property type="component" value="Chromosome 1"/>
</dbReference>
<dbReference type="GO" id="GO:0003677">
    <property type="term" value="F:DNA binding"/>
    <property type="evidence" value="ECO:0007669"/>
    <property type="project" value="InterPro"/>
</dbReference>
<dbReference type="CDD" id="cd22359">
    <property type="entry name" value="SfsA-like_bacterial"/>
    <property type="match status" value="1"/>
</dbReference>
<dbReference type="FunFam" id="3.40.1350.60:FF:000001">
    <property type="entry name" value="Sugar fermentation stimulation protein A"/>
    <property type="match status" value="1"/>
</dbReference>
<dbReference type="Gene3D" id="2.40.50.580">
    <property type="match status" value="1"/>
</dbReference>
<dbReference type="Gene3D" id="3.40.1350.60">
    <property type="match status" value="1"/>
</dbReference>
<dbReference type="HAMAP" id="MF_00095">
    <property type="entry name" value="SfsA"/>
    <property type="match status" value="1"/>
</dbReference>
<dbReference type="InterPro" id="IPR005224">
    <property type="entry name" value="SfsA"/>
</dbReference>
<dbReference type="InterPro" id="IPR040452">
    <property type="entry name" value="SfsA_C"/>
</dbReference>
<dbReference type="InterPro" id="IPR041465">
    <property type="entry name" value="SfsA_N"/>
</dbReference>
<dbReference type="NCBIfam" id="TIGR00230">
    <property type="entry name" value="sfsA"/>
    <property type="match status" value="1"/>
</dbReference>
<dbReference type="PANTHER" id="PTHR30545">
    <property type="entry name" value="SUGAR FERMENTATION STIMULATION PROTEIN A"/>
    <property type="match status" value="1"/>
</dbReference>
<dbReference type="PANTHER" id="PTHR30545:SF2">
    <property type="entry name" value="SUGAR FERMENTATION STIMULATION PROTEIN A"/>
    <property type="match status" value="1"/>
</dbReference>
<dbReference type="Pfam" id="PF03749">
    <property type="entry name" value="SfsA"/>
    <property type="match status" value="1"/>
</dbReference>
<dbReference type="Pfam" id="PF17746">
    <property type="entry name" value="SfsA_N"/>
    <property type="match status" value="1"/>
</dbReference>
<proteinExistence type="inferred from homology"/>
<comment type="similarity">
    <text evidence="1">Belongs to the SfsA family.</text>
</comment>
<sequence>MKFEAKLESGILIRRYKRFLTDIKLPDKSERTIHCANSGAMTGCAEPGNTVFFSTSSNLKRKYPNSWELSVTEHNHTICVNTIRANQLVVEAIINKEIDELVNYAELKTEVKYGSENSRIDIFLSAEMLPDCYIEVKSVTLLDESGQGYFPDSVTTRGQKHLRELTEIAQNGQKAVLFFAVLHSGIEKVSIAHHIDQQYYSLLLEAIESGVTVLCYQAEMSPTEMKIVRKLPFSI</sequence>
<accession>B6ELD6</accession>
<gene>
    <name evidence="1" type="primary">sfsA</name>
    <name type="ordered locus">VSAL_I2604</name>
</gene>
<protein>
    <recommendedName>
        <fullName evidence="1">Sugar fermentation stimulation protein homolog</fullName>
    </recommendedName>
</protein>
<name>SFSA_ALISL</name>
<evidence type="ECO:0000255" key="1">
    <source>
        <dbReference type="HAMAP-Rule" id="MF_00095"/>
    </source>
</evidence>
<organism>
    <name type="scientific">Aliivibrio salmonicida (strain LFI1238)</name>
    <name type="common">Vibrio salmonicida (strain LFI1238)</name>
    <dbReference type="NCBI Taxonomy" id="316275"/>
    <lineage>
        <taxon>Bacteria</taxon>
        <taxon>Pseudomonadati</taxon>
        <taxon>Pseudomonadota</taxon>
        <taxon>Gammaproteobacteria</taxon>
        <taxon>Vibrionales</taxon>
        <taxon>Vibrionaceae</taxon>
        <taxon>Aliivibrio</taxon>
    </lineage>
</organism>
<feature type="chain" id="PRO_1000093564" description="Sugar fermentation stimulation protein homolog">
    <location>
        <begin position="1"/>
        <end position="235"/>
    </location>
</feature>